<keyword id="KW-0067">ATP-binding</keyword>
<keyword id="KW-0238">DNA-binding</keyword>
<keyword id="KW-0378">Hydrolase</keyword>
<keyword id="KW-0496">Mitochondrion</keyword>
<keyword id="KW-0547">Nucleotide-binding</keyword>
<keyword id="KW-0645">Protease</keyword>
<keyword id="KW-1185">Reference proteome</keyword>
<keyword id="KW-0720">Serine protease</keyword>
<keyword id="KW-0809">Transit peptide</keyword>
<name>LONM_CANGA</name>
<evidence type="ECO:0000255" key="1">
    <source>
        <dbReference type="HAMAP-Rule" id="MF_03120"/>
    </source>
</evidence>
<evidence type="ECO:0000255" key="2">
    <source>
        <dbReference type="PROSITE-ProRule" id="PRU01122"/>
    </source>
</evidence>
<evidence type="ECO:0000255" key="3">
    <source>
        <dbReference type="PROSITE-ProRule" id="PRU01123"/>
    </source>
</evidence>
<evidence type="ECO:0000256" key="4">
    <source>
        <dbReference type="SAM" id="MobiDB-lite"/>
    </source>
</evidence>
<proteinExistence type="inferred from homology"/>
<organism>
    <name type="scientific">Candida glabrata (strain ATCC 2001 / BCRC 20586 / JCM 3761 / NBRC 0622 / NRRL Y-65 / CBS 138)</name>
    <name type="common">Yeast</name>
    <name type="synonym">Nakaseomyces glabratus</name>
    <dbReference type="NCBI Taxonomy" id="284593"/>
    <lineage>
        <taxon>Eukaryota</taxon>
        <taxon>Fungi</taxon>
        <taxon>Dikarya</taxon>
        <taxon>Ascomycota</taxon>
        <taxon>Saccharomycotina</taxon>
        <taxon>Saccharomycetes</taxon>
        <taxon>Saccharomycetales</taxon>
        <taxon>Saccharomycetaceae</taxon>
        <taxon>Nakaseomyces</taxon>
    </lineage>
</organism>
<dbReference type="EC" id="3.4.21.53" evidence="1"/>
<dbReference type="EMBL" id="CR380956">
    <property type="protein sequence ID" value="CAG60847.1"/>
    <property type="molecule type" value="Genomic_DNA"/>
</dbReference>
<dbReference type="RefSeq" id="XP_447898.1">
    <property type="nucleotide sequence ID" value="XM_447898.1"/>
</dbReference>
<dbReference type="SMR" id="Q6FPE6"/>
<dbReference type="FunCoup" id="Q6FPE6">
    <property type="interactions" value="1077"/>
</dbReference>
<dbReference type="STRING" id="284593.Q6FPE6"/>
<dbReference type="EnsemblFungi" id="CAGL0J04422g-T">
    <property type="protein sequence ID" value="CAGL0J04422g-T-p1"/>
    <property type="gene ID" value="CAGL0J04422g"/>
</dbReference>
<dbReference type="KEGG" id="cgr:2889636"/>
<dbReference type="CGD" id="CAL0132864">
    <property type="gene designation" value="CAGL0J04422g"/>
</dbReference>
<dbReference type="VEuPathDB" id="FungiDB:CAGL0J04422g"/>
<dbReference type="eggNOG" id="KOG2004">
    <property type="taxonomic scope" value="Eukaryota"/>
</dbReference>
<dbReference type="HOGENOM" id="CLU_004109_1_0_1"/>
<dbReference type="InParanoid" id="Q6FPE6"/>
<dbReference type="OMA" id="WLTNIPW"/>
<dbReference type="Proteomes" id="UP000002428">
    <property type="component" value="Chromosome J"/>
</dbReference>
<dbReference type="GO" id="GO:0005759">
    <property type="term" value="C:mitochondrial matrix"/>
    <property type="evidence" value="ECO:0007669"/>
    <property type="project" value="UniProtKB-SubCell"/>
</dbReference>
<dbReference type="GO" id="GO:0005524">
    <property type="term" value="F:ATP binding"/>
    <property type="evidence" value="ECO:0007669"/>
    <property type="project" value="UniProtKB-UniRule"/>
</dbReference>
<dbReference type="GO" id="GO:0016887">
    <property type="term" value="F:ATP hydrolysis activity"/>
    <property type="evidence" value="ECO:0007669"/>
    <property type="project" value="UniProtKB-UniRule"/>
</dbReference>
<dbReference type="GO" id="GO:0004176">
    <property type="term" value="F:ATP-dependent peptidase activity"/>
    <property type="evidence" value="ECO:0007669"/>
    <property type="project" value="UniProtKB-UniRule"/>
</dbReference>
<dbReference type="GO" id="GO:0043565">
    <property type="term" value="F:sequence-specific DNA binding"/>
    <property type="evidence" value="ECO:0007669"/>
    <property type="project" value="UniProtKB-UniRule"/>
</dbReference>
<dbReference type="GO" id="GO:0004252">
    <property type="term" value="F:serine-type endopeptidase activity"/>
    <property type="evidence" value="ECO:0007669"/>
    <property type="project" value="UniProtKB-UniRule"/>
</dbReference>
<dbReference type="GO" id="GO:0003697">
    <property type="term" value="F:single-stranded DNA binding"/>
    <property type="evidence" value="ECO:0007669"/>
    <property type="project" value="TreeGrafter"/>
</dbReference>
<dbReference type="GO" id="GO:0034599">
    <property type="term" value="P:cellular response to oxidative stress"/>
    <property type="evidence" value="ECO:0007669"/>
    <property type="project" value="UniProtKB-UniRule"/>
</dbReference>
<dbReference type="GO" id="GO:0051131">
    <property type="term" value="P:chaperone-mediated protein complex assembly"/>
    <property type="evidence" value="ECO:0007669"/>
    <property type="project" value="UniProtKB-UniRule"/>
</dbReference>
<dbReference type="GO" id="GO:0141164">
    <property type="term" value="P:mitochondrial protein quality control"/>
    <property type="evidence" value="ECO:0007669"/>
    <property type="project" value="EnsemblFungi"/>
</dbReference>
<dbReference type="GO" id="GO:0007005">
    <property type="term" value="P:mitochondrion organization"/>
    <property type="evidence" value="ECO:0007669"/>
    <property type="project" value="TreeGrafter"/>
</dbReference>
<dbReference type="GO" id="GO:0070407">
    <property type="term" value="P:oxidation-dependent protein catabolic process"/>
    <property type="evidence" value="ECO:0007669"/>
    <property type="project" value="UniProtKB-UniRule"/>
</dbReference>
<dbReference type="GO" id="GO:1901858">
    <property type="term" value="P:regulation of mitochondrial DNA metabolic process"/>
    <property type="evidence" value="ECO:0007669"/>
    <property type="project" value="EnsemblFungi"/>
</dbReference>
<dbReference type="CDD" id="cd19500">
    <property type="entry name" value="RecA-like_Lon"/>
    <property type="match status" value="1"/>
</dbReference>
<dbReference type="FunFam" id="3.40.50.300:FF:000021">
    <property type="entry name" value="Lon protease homolog"/>
    <property type="match status" value="1"/>
</dbReference>
<dbReference type="FunFam" id="1.20.5.5270:FF:000001">
    <property type="entry name" value="Lon protease homolog, mitochondrial"/>
    <property type="match status" value="1"/>
</dbReference>
<dbReference type="FunFam" id="1.20.58.1480:FF:000003">
    <property type="entry name" value="Lon protease homolog, mitochondrial"/>
    <property type="match status" value="1"/>
</dbReference>
<dbReference type="FunFam" id="2.30.130.40:FF:000010">
    <property type="entry name" value="Lon protease homolog, mitochondrial"/>
    <property type="match status" value="1"/>
</dbReference>
<dbReference type="FunFam" id="3.30.230.10:FF:000015">
    <property type="entry name" value="Lon protease homolog, mitochondrial"/>
    <property type="match status" value="1"/>
</dbReference>
<dbReference type="Gene3D" id="1.10.8.60">
    <property type="match status" value="1"/>
</dbReference>
<dbReference type="Gene3D" id="1.20.5.5270">
    <property type="match status" value="1"/>
</dbReference>
<dbReference type="Gene3D" id="1.20.58.1480">
    <property type="match status" value="1"/>
</dbReference>
<dbReference type="Gene3D" id="3.30.230.10">
    <property type="match status" value="1"/>
</dbReference>
<dbReference type="Gene3D" id="2.30.130.40">
    <property type="entry name" value="LON domain-like"/>
    <property type="match status" value="1"/>
</dbReference>
<dbReference type="Gene3D" id="3.40.50.300">
    <property type="entry name" value="P-loop containing nucleotide triphosphate hydrolases"/>
    <property type="match status" value="1"/>
</dbReference>
<dbReference type="HAMAP" id="MF_03120">
    <property type="entry name" value="lonm_euk"/>
    <property type="match status" value="1"/>
</dbReference>
<dbReference type="InterPro" id="IPR003593">
    <property type="entry name" value="AAA+_ATPase"/>
</dbReference>
<dbReference type="InterPro" id="IPR003959">
    <property type="entry name" value="ATPase_AAA_core"/>
</dbReference>
<dbReference type="InterPro" id="IPR004815">
    <property type="entry name" value="Lon_bac/euk-typ"/>
</dbReference>
<dbReference type="InterPro" id="IPR054594">
    <property type="entry name" value="Lon_lid"/>
</dbReference>
<dbReference type="InterPro" id="IPR008269">
    <property type="entry name" value="Lon_proteolytic"/>
</dbReference>
<dbReference type="InterPro" id="IPR027065">
    <property type="entry name" value="Lon_Prtase"/>
</dbReference>
<dbReference type="InterPro" id="IPR003111">
    <property type="entry name" value="Lon_prtase_N"/>
</dbReference>
<dbReference type="InterPro" id="IPR046336">
    <property type="entry name" value="Lon_prtase_N_sf"/>
</dbReference>
<dbReference type="InterPro" id="IPR027503">
    <property type="entry name" value="Lonm_euk"/>
</dbReference>
<dbReference type="InterPro" id="IPR027417">
    <property type="entry name" value="P-loop_NTPase"/>
</dbReference>
<dbReference type="InterPro" id="IPR008268">
    <property type="entry name" value="Peptidase_S16_AS"/>
</dbReference>
<dbReference type="InterPro" id="IPR015947">
    <property type="entry name" value="PUA-like_sf"/>
</dbReference>
<dbReference type="InterPro" id="IPR020568">
    <property type="entry name" value="Ribosomal_Su5_D2-typ_SF"/>
</dbReference>
<dbReference type="InterPro" id="IPR014721">
    <property type="entry name" value="Ribsml_uS5_D2-typ_fold_subgr"/>
</dbReference>
<dbReference type="NCBIfam" id="TIGR00763">
    <property type="entry name" value="lon"/>
    <property type="match status" value="1"/>
</dbReference>
<dbReference type="PANTHER" id="PTHR43718">
    <property type="entry name" value="LON PROTEASE"/>
    <property type="match status" value="1"/>
</dbReference>
<dbReference type="PANTHER" id="PTHR43718:SF2">
    <property type="entry name" value="LON PROTEASE HOMOLOG, MITOCHONDRIAL"/>
    <property type="match status" value="1"/>
</dbReference>
<dbReference type="Pfam" id="PF00004">
    <property type="entry name" value="AAA"/>
    <property type="match status" value="1"/>
</dbReference>
<dbReference type="Pfam" id="PF05362">
    <property type="entry name" value="Lon_C"/>
    <property type="match status" value="1"/>
</dbReference>
<dbReference type="Pfam" id="PF22667">
    <property type="entry name" value="Lon_lid"/>
    <property type="match status" value="1"/>
</dbReference>
<dbReference type="Pfam" id="PF02190">
    <property type="entry name" value="LON_substr_bdg"/>
    <property type="match status" value="1"/>
</dbReference>
<dbReference type="PRINTS" id="PR00830">
    <property type="entry name" value="ENDOLAPTASE"/>
</dbReference>
<dbReference type="SMART" id="SM00382">
    <property type="entry name" value="AAA"/>
    <property type="match status" value="1"/>
</dbReference>
<dbReference type="SMART" id="SM00464">
    <property type="entry name" value="LON"/>
    <property type="match status" value="1"/>
</dbReference>
<dbReference type="SUPFAM" id="SSF52540">
    <property type="entry name" value="P-loop containing nucleoside triphosphate hydrolases"/>
    <property type="match status" value="1"/>
</dbReference>
<dbReference type="SUPFAM" id="SSF88697">
    <property type="entry name" value="PUA domain-like"/>
    <property type="match status" value="1"/>
</dbReference>
<dbReference type="SUPFAM" id="SSF54211">
    <property type="entry name" value="Ribosomal protein S5 domain 2-like"/>
    <property type="match status" value="1"/>
</dbReference>
<dbReference type="PROSITE" id="PS51787">
    <property type="entry name" value="LON_N"/>
    <property type="match status" value="1"/>
</dbReference>
<dbReference type="PROSITE" id="PS51786">
    <property type="entry name" value="LON_PROTEOLYTIC"/>
    <property type="match status" value="1"/>
</dbReference>
<dbReference type="PROSITE" id="PS01046">
    <property type="entry name" value="LON_SER"/>
    <property type="match status" value="1"/>
</dbReference>
<accession>Q6FPE6</accession>
<gene>
    <name evidence="1" type="primary">PIM1</name>
    <name type="ordered locus">CAGL0J04422g</name>
</gene>
<protein>
    <recommendedName>
        <fullName evidence="1">Lon protease homolog, mitochondrial</fullName>
        <ecNumber evidence="1">3.4.21.53</ecNumber>
    </recommendedName>
</protein>
<feature type="transit peptide" description="Mitochondrion" evidence="1">
    <location>
        <begin position="1"/>
        <end position="29"/>
    </location>
</feature>
<feature type="chain" id="PRO_0000395776" description="Lon protease homolog, mitochondrial">
    <location>
        <begin position="30"/>
        <end position="1026"/>
    </location>
</feature>
<feature type="domain" description="Lon N-terminal" evidence="3">
    <location>
        <begin position="62"/>
        <end position="345"/>
    </location>
</feature>
<feature type="domain" description="Lon proteolytic" evidence="2">
    <location>
        <begin position="815"/>
        <end position="1001"/>
    </location>
</feature>
<feature type="region of interest" description="Disordered" evidence="4">
    <location>
        <begin position="29"/>
        <end position="55"/>
    </location>
</feature>
<feature type="region of interest" description="Disordered" evidence="4">
    <location>
        <begin position="185"/>
        <end position="206"/>
    </location>
</feature>
<feature type="region of interest" description="Disordered" evidence="4">
    <location>
        <begin position="711"/>
        <end position="785"/>
    </location>
</feature>
<feature type="compositionally biased region" description="Acidic residues" evidence="4">
    <location>
        <begin position="185"/>
        <end position="194"/>
    </location>
</feature>
<feature type="compositionally biased region" description="Basic and acidic residues" evidence="4">
    <location>
        <begin position="195"/>
        <end position="206"/>
    </location>
</feature>
<feature type="compositionally biased region" description="Polar residues" evidence="4">
    <location>
        <begin position="714"/>
        <end position="737"/>
    </location>
</feature>
<feature type="active site" evidence="1">
    <location>
        <position position="907"/>
    </location>
</feature>
<feature type="active site" evidence="1">
    <location>
        <position position="950"/>
    </location>
</feature>
<feature type="binding site" evidence="1">
    <location>
        <begin position="497"/>
        <end position="504"/>
    </location>
    <ligand>
        <name>ATP</name>
        <dbReference type="ChEBI" id="CHEBI:30616"/>
    </ligand>
</feature>
<sequence>MLGTRVTRAVYTRAPLKLQLRALGLHRRYVHNGSKNDEGSSTSTTTNKEENDKKLPDVYPQMLALPISRRPLFPGFYKAVVISEPRVMKAITDMVERQQPYIGAFMLKDSNNDTDIIHDISEVHELGVLAQVTSAFPSKDEKTGKETMTALLYPHKRIKIDQLIPPKDVKIEDIVVEKVVDNEVASEETKDEETVDKTESATDKVSEEITEEIAKAPSTEVTEDPDNYENPTDFLKDYNVTLVNVSNLEDEPFDIKSPIINALTSEILKVFKEISQLNSMFREQIATFSASIQSATTNIFEEPAKLADFAAAVSAGEEEELQEVLESLNIEQRLEKSLLVLKKELMNAELQNKISKDVETKIQKRQKEYYLMEQLKGIKRELGIDDGRDKLVDTYKKRVEKLNLPENVQKTFDEEITKLATLETSMSEFGVIRNYLDWLTSLPWGINSKEQYSIPRARKILDEDHYGMKDVKDRILEFIAVGKLLGKVDGKIICFVGPPGVGKTSIGKSISRALNRQFFRFSVGGMTDVAEIKGHRRTYIGALPGRIIQALKKCQTQNPLILIDEIDKIGHGGIHGDPSAALLEVLDPEQNNSFLDNYLDIPIDLSKVLFVCTANSLDTIPRPLLDRMEVIELTGYVAEDKIKIAEQYLVPSAKKTAGLQNATVSMDEEAINALMKYYCRESGVRNLKKHIEKIYRKAALEVVKKMSIEDTEPLVSTSEEPQLSQTNQNISSSSAEDSTTDLEDSVNPDTAKEASKPNNSQEGASVEETKKAVKTEEEEDTSMIVPEDIKVEITPEDLKKYVGPPIYTTDRLYETTPPGVIMGLAWTNMGGCSLYVESVLEQPLHNCKHANLERTGQLGDVMKESSRLAYSFSKMYLSKKFPENRFFEKAAIHLHCPEGATPKDGPSAGVTMATSFLSLALNKPVDPTVAMTGELTLTGKVLRIGGLREKVVAAKRSGAKTVIFPKDNLNDWEELPENVKEGMEPLAADWYDDIYKRLFSGVKKSEGNNVWKSEFELIDKKKKEND</sequence>
<reference key="1">
    <citation type="journal article" date="2004" name="Nature">
        <title>Genome evolution in yeasts.</title>
        <authorList>
            <person name="Dujon B."/>
            <person name="Sherman D."/>
            <person name="Fischer G."/>
            <person name="Durrens P."/>
            <person name="Casaregola S."/>
            <person name="Lafontaine I."/>
            <person name="de Montigny J."/>
            <person name="Marck C."/>
            <person name="Neuveglise C."/>
            <person name="Talla E."/>
            <person name="Goffard N."/>
            <person name="Frangeul L."/>
            <person name="Aigle M."/>
            <person name="Anthouard V."/>
            <person name="Babour A."/>
            <person name="Barbe V."/>
            <person name="Barnay S."/>
            <person name="Blanchin S."/>
            <person name="Beckerich J.-M."/>
            <person name="Beyne E."/>
            <person name="Bleykasten C."/>
            <person name="Boisrame A."/>
            <person name="Boyer J."/>
            <person name="Cattolico L."/>
            <person name="Confanioleri F."/>
            <person name="de Daruvar A."/>
            <person name="Despons L."/>
            <person name="Fabre E."/>
            <person name="Fairhead C."/>
            <person name="Ferry-Dumazet H."/>
            <person name="Groppi A."/>
            <person name="Hantraye F."/>
            <person name="Hennequin C."/>
            <person name="Jauniaux N."/>
            <person name="Joyet P."/>
            <person name="Kachouri R."/>
            <person name="Kerrest A."/>
            <person name="Koszul R."/>
            <person name="Lemaire M."/>
            <person name="Lesur I."/>
            <person name="Ma L."/>
            <person name="Muller H."/>
            <person name="Nicaud J.-M."/>
            <person name="Nikolski M."/>
            <person name="Oztas S."/>
            <person name="Ozier-Kalogeropoulos O."/>
            <person name="Pellenz S."/>
            <person name="Potier S."/>
            <person name="Richard G.-F."/>
            <person name="Straub M.-L."/>
            <person name="Suleau A."/>
            <person name="Swennen D."/>
            <person name="Tekaia F."/>
            <person name="Wesolowski-Louvel M."/>
            <person name="Westhof E."/>
            <person name="Wirth B."/>
            <person name="Zeniou-Meyer M."/>
            <person name="Zivanovic Y."/>
            <person name="Bolotin-Fukuhara M."/>
            <person name="Thierry A."/>
            <person name="Bouchier C."/>
            <person name="Caudron B."/>
            <person name="Scarpelli C."/>
            <person name="Gaillardin C."/>
            <person name="Weissenbach J."/>
            <person name="Wincker P."/>
            <person name="Souciet J.-L."/>
        </authorList>
    </citation>
    <scope>NUCLEOTIDE SEQUENCE [LARGE SCALE GENOMIC DNA]</scope>
    <source>
        <strain>ATCC 2001 / BCRC 20586 / JCM 3761 / NBRC 0622 / NRRL Y-65 / CBS 138</strain>
    </source>
</reference>
<comment type="function">
    <text evidence="1">ATP-dependent serine protease that mediates the selective degradation of misfolded, unassembled or oxidatively damaged polypeptides as well as certain short-lived regulatory proteins in the mitochondrial matrix. May also have a chaperone function in the assembly of inner membrane protein complexes. Participates in the regulation of mitochondrial gene expression and in the maintenance of the integrity of the mitochondrial genome. Binds to mitochondrial DNA in a site-specific manner.</text>
</comment>
<comment type="catalytic activity">
    <reaction evidence="1">
        <text>Hydrolysis of proteins in presence of ATP.</text>
        <dbReference type="EC" id="3.4.21.53"/>
    </reaction>
</comment>
<comment type="subunit">
    <text evidence="1">Homohexamer or homoheptamer. Organized in a ring with a central cavity.</text>
</comment>
<comment type="subcellular location">
    <subcellularLocation>
        <location evidence="1">Mitochondrion matrix</location>
    </subcellularLocation>
</comment>
<comment type="similarity">
    <text evidence="1">Belongs to the peptidase S16 family.</text>
</comment>